<dbReference type="EMBL" id="Z49703">
    <property type="protein sequence ID" value="CAA89761.1"/>
    <property type="molecule type" value="Genomic_DNA"/>
</dbReference>
<dbReference type="EMBL" id="BK006946">
    <property type="protein sequence ID" value="DAA09950.1"/>
    <property type="molecule type" value="Genomic_DNA"/>
</dbReference>
<dbReference type="PIR" id="S53588">
    <property type="entry name" value="S53588"/>
</dbReference>
<dbReference type="RefSeq" id="NP_013766.1">
    <molecule id="P0CX69-1"/>
    <property type="nucleotide sequence ID" value="NM_001182548.1"/>
</dbReference>
<dbReference type="RefSeq" id="NP_058151.1">
    <molecule id="P0CX69-1"/>
    <property type="nucleotide sequence ID" value="NM_001184424.1"/>
</dbReference>
<dbReference type="RefSeq" id="NP_058156.1">
    <molecule id="P0CX69-1"/>
    <property type="nucleotide sequence ID" value="NM_001184429.1"/>
</dbReference>
<dbReference type="RefSeq" id="NP_058166.1">
    <molecule id="P0CX69-1"/>
    <property type="nucleotide sequence ID" value="NM_001184399.1"/>
</dbReference>
<dbReference type="SMR" id="P0CX69"/>
<dbReference type="BioGRID" id="32371">
    <property type="interactions" value="2"/>
</dbReference>
<dbReference type="BioGRID" id="33412">
    <property type="interactions" value="5"/>
</dbReference>
<dbReference type="BioGRID" id="35226">
    <property type="interactions" value="5"/>
</dbReference>
<dbReference type="BioGRID" id="36913">
    <property type="interactions" value="2"/>
</dbReference>
<dbReference type="FunCoup" id="P0CX69">
    <property type="interactions" value="51"/>
</dbReference>
<dbReference type="GlyGen" id="P0CX69">
    <property type="glycosylation" value="2 sites"/>
</dbReference>
<dbReference type="iPTMnet" id="P0CX69"/>
<dbReference type="GeneID" id="855071"/>
<dbReference type="KEGG" id="sce:YDR316W-A"/>
<dbReference type="KEGG" id="sce:YER159C-A"/>
<dbReference type="KEGG" id="sce:YGR161C-C"/>
<dbReference type="KEGG" id="sce:YMR051C"/>
<dbReference type="AGR" id="SGD:S000004654"/>
<dbReference type="SGD" id="S000004654">
    <property type="gene designation" value="YMR051C"/>
</dbReference>
<dbReference type="VEuPathDB" id="FungiDB:YDR316W-A"/>
<dbReference type="VEuPathDB" id="FungiDB:YER159C-A"/>
<dbReference type="VEuPathDB" id="FungiDB:YGR161C-C"/>
<dbReference type="VEuPathDB" id="FungiDB:YMR051C"/>
<dbReference type="HOGENOM" id="CLU_045291_1_0_1"/>
<dbReference type="InParanoid" id="P0CX69"/>
<dbReference type="OrthoDB" id="4046078at2759"/>
<dbReference type="Proteomes" id="UP000002311">
    <property type="component" value="Chromosome XIII"/>
</dbReference>
<dbReference type="RNAct" id="P0CX69">
    <property type="molecule type" value="protein"/>
</dbReference>
<dbReference type="GO" id="GO:0005737">
    <property type="term" value="C:cytoplasm"/>
    <property type="evidence" value="ECO:0007669"/>
    <property type="project" value="UniProtKB-SubCell"/>
</dbReference>
<dbReference type="GO" id="GO:0003723">
    <property type="term" value="F:RNA binding"/>
    <property type="evidence" value="ECO:0007669"/>
    <property type="project" value="UniProtKB-KW"/>
</dbReference>
<dbReference type="GO" id="GO:0075523">
    <property type="term" value="P:viral translational frameshifting"/>
    <property type="evidence" value="ECO:0007669"/>
    <property type="project" value="UniProtKB-KW"/>
</dbReference>
<dbReference type="InterPro" id="IPR015820">
    <property type="entry name" value="TYA"/>
</dbReference>
<dbReference type="Pfam" id="PF01021">
    <property type="entry name" value="TYA"/>
    <property type="match status" value="1"/>
</dbReference>
<comment type="function">
    <text evidence="1">Capsid protein (CA) is the structural component of the virus-like particle (VLP), forming the shell that encapsulates the retrotransposons dimeric RNA genome. The particles are assembled from trimer-clustered units and there are holes in the capsid shells that allow for the diffusion of macromolecules. CA also has nucleocapsid-like chaperone activity, promoting primer tRNA(i)-Met annealing to the multipartite primer-binding site (PBS), dimerization of Ty1 RNA and initiation of reverse transcription (By similarity).</text>
</comment>
<comment type="subunit">
    <text evidence="1">Homotrimer.</text>
</comment>
<comment type="subcellular location">
    <subcellularLocation>
        <location evidence="1">Cytoplasm</location>
    </subcellularLocation>
</comment>
<comment type="alternative products">
    <event type="ribosomal frameshifting"/>
    <isoform>
        <id>P0CX69-1</id>
        <name>Transposon Ty1-MR2 Gag polyprotein</name>
        <sequence type="displayed"/>
    </isoform>
    <isoform>
        <id>Q04670-1</id>
        <name>Transposon Ty1-MR2 Gag-Pol polyprotein</name>
        <sequence type="external"/>
    </isoform>
    <text evidence="1">The Gag-Pol polyprotein is generated by a +1 ribosomal frameshift between the codons for Leu-435 and Gly-436. The ratio of Gag:Gag-Pol varies between 20:1 and 5:1 (By similarity).</text>
</comment>
<comment type="induction">
    <text evidence="4">Ty1-MR2 is a weakly expressed element. Induced under amino acid starvation conditions by GCN4.</text>
</comment>
<comment type="domain">
    <text evidence="1">The C-terminal RNA-binding region of CA is sufficient for all its nucleocapsid-like chaperone activities.</text>
</comment>
<comment type="miscellaneous">
    <text>Retrotransposons are mobile genetic entities that are able to replicate via an RNA intermediate and a reverse transcription step. In contrast to retroviruses, retrotransposons are non-infectious, lack an envelope and remain intracellular. Ty1 retrotransposons belong to the copia elements (pseudoviridae).</text>
</comment>
<comment type="miscellaneous">
    <molecule>Isoform Transposon Ty1-MR2 Gag polyprotein</molecule>
    <text>Produced by conventional translation.</text>
</comment>
<keyword id="KW-0963">Cytoplasm</keyword>
<keyword id="KW-0597">Phosphoprotein</keyword>
<keyword id="KW-1185">Reference proteome</keyword>
<keyword id="KW-0688">Ribosomal frameshifting</keyword>
<keyword id="KW-0694">RNA-binding</keyword>
<keyword id="KW-0814">Transposable element</keyword>
<proteinExistence type="evidence at transcript level"/>
<sequence length="440" mass="49129">MESQQLSNYPHISHGSACASVTSKEVHTNQDPLDVSASKIQEYDKASTKANSQQTTTPASSAVPENPHHASPQPASVPPPQNGPYPQQCMMTQNQANPSGWSFYGHPSMIPYTPYQMSPMYFPPGPQSQFPQYPSSVGTPLSTPSPESGNTFTDSSSADSDMTSTKKYVRPPPMLTSPNDFPNWVKTYIKFLQNSNLGGIIPTVNGKPVRQITDDELTFLYNTFQIFAPSQFLPTWVKDILSVDYTDIMKILSKSIEKMQSDTQEANDIVTLANLQYNGSTPADAFETKVTNIIDRLNNNGIHINNKVACQLIMRGLSGEYKFLRYTRHRHLNMTVAELFLDIHAIYEEQQGSRNSKPNYRRNPSDEKNDSRSYTNTTKPKVIARNPQKTNNSKSKTARAHNVSTSNNSPSTDNDSISKSTTEPIQLNNKHDLHLRPETY</sequence>
<gene>
    <name type="primary">TY1A-MR2</name>
    <name type="synonym">YMRCTy1-4 GAG</name>
    <name type="ordered locus">YMR051C</name>
    <name type="ORF">YM9796.04C</name>
</gene>
<accession>P0CX69</accession>
<accession>D3DM68</accession>
<accession>Q12231</accession>
<feature type="chain" id="PRO_0000409788" description="Transposon Ty1-MR2 Gag polyprotein">
    <location>
        <begin position="1"/>
        <end position="440"/>
    </location>
</feature>
<feature type="chain" id="PRO_0000409789" description="Capsid protein" evidence="1">
    <location>
        <begin position="1"/>
        <end position="401"/>
    </location>
</feature>
<feature type="peptide" id="PRO_0000409790" description="Gag-p4" evidence="1">
    <location>
        <begin position="402"/>
        <end position="440"/>
    </location>
</feature>
<feature type="region of interest" description="Disordered" evidence="3">
    <location>
        <begin position="1"/>
        <end position="93"/>
    </location>
</feature>
<feature type="region of interest" description="Disordered" evidence="3">
    <location>
        <begin position="126"/>
        <end position="173"/>
    </location>
</feature>
<feature type="region of interest" description="RNA-binding" evidence="1">
    <location>
        <begin position="299"/>
        <end position="401"/>
    </location>
</feature>
<feature type="region of interest" description="Disordered" evidence="3">
    <location>
        <begin position="352"/>
        <end position="440"/>
    </location>
</feature>
<feature type="compositionally biased region" description="Polar residues" evidence="3">
    <location>
        <begin position="1"/>
        <end position="10"/>
    </location>
</feature>
<feature type="compositionally biased region" description="Polar residues" evidence="3">
    <location>
        <begin position="48"/>
        <end position="60"/>
    </location>
</feature>
<feature type="compositionally biased region" description="Polar residues" evidence="3">
    <location>
        <begin position="127"/>
        <end position="152"/>
    </location>
</feature>
<feature type="compositionally biased region" description="Low complexity" evidence="3">
    <location>
        <begin position="153"/>
        <end position="165"/>
    </location>
</feature>
<feature type="compositionally biased region" description="Low complexity" evidence="3">
    <location>
        <begin position="402"/>
        <end position="418"/>
    </location>
</feature>
<feature type="compositionally biased region" description="Polar residues" evidence="3">
    <location>
        <begin position="419"/>
        <end position="428"/>
    </location>
</feature>
<feature type="compositionally biased region" description="Basic and acidic residues" evidence="3">
    <location>
        <begin position="429"/>
        <end position="440"/>
    </location>
</feature>
<feature type="site" description="Cleavage; by Ty1 protease" evidence="1">
    <location>
        <begin position="401"/>
        <end position="402"/>
    </location>
</feature>
<feature type="modified residue" description="Phosphoserine" evidence="2">
    <location>
        <position position="416"/>
    </location>
</feature>
<protein>
    <recommendedName>
        <fullName>Transposon Ty1-MR2 Gag polyprotein</fullName>
    </recommendedName>
    <alternativeName>
        <fullName>Gag-p49</fullName>
    </alternativeName>
    <alternativeName>
        <fullName>Transposon Ty1 protein A</fullName>
        <shortName>TY1A</shortName>
        <shortName>TYA</shortName>
    </alternativeName>
    <alternativeName>
        <fullName>p58</fullName>
    </alternativeName>
    <component>
        <recommendedName>
            <fullName>Capsid protein</fullName>
            <shortName>CA</shortName>
        </recommendedName>
        <alternativeName>
            <fullName>Gag-p45</fullName>
        </alternativeName>
        <alternativeName>
            <fullName>p54</fullName>
        </alternativeName>
    </component>
    <component>
        <recommendedName>
            <fullName>Gag-p4</fullName>
        </recommendedName>
    </component>
</protein>
<evidence type="ECO:0000250" key="1"/>
<evidence type="ECO:0000250" key="2">
    <source>
        <dbReference type="UniProtKB" id="Q12441"/>
    </source>
</evidence>
<evidence type="ECO:0000256" key="3">
    <source>
        <dbReference type="SAM" id="MobiDB-lite"/>
    </source>
</evidence>
<evidence type="ECO:0000269" key="4">
    <source>
    </source>
</evidence>
<reference key="1">
    <citation type="journal article" date="1997" name="Nature">
        <title>The nucleotide sequence of Saccharomyces cerevisiae chromosome XIII.</title>
        <authorList>
            <person name="Bowman S."/>
            <person name="Churcher C.M."/>
            <person name="Badcock K."/>
            <person name="Brown D."/>
            <person name="Chillingworth T."/>
            <person name="Connor R."/>
            <person name="Dedman K."/>
            <person name="Devlin K."/>
            <person name="Gentles S."/>
            <person name="Hamlin N."/>
            <person name="Hunt S."/>
            <person name="Jagels K."/>
            <person name="Lye G."/>
            <person name="Moule S."/>
            <person name="Odell C."/>
            <person name="Pearson D."/>
            <person name="Rajandream M.A."/>
            <person name="Rice P."/>
            <person name="Skelton J."/>
            <person name="Walsh S.V."/>
            <person name="Whitehead S."/>
            <person name="Barrell B.G."/>
        </authorList>
    </citation>
    <scope>NUCLEOTIDE SEQUENCE [LARGE SCALE GENOMIC DNA]</scope>
    <source>
        <strain>ATCC 204508 / S288c</strain>
    </source>
</reference>
<reference key="2">
    <citation type="journal article" date="2014" name="G3 (Bethesda)">
        <title>The reference genome sequence of Saccharomyces cerevisiae: Then and now.</title>
        <authorList>
            <person name="Engel S.R."/>
            <person name="Dietrich F.S."/>
            <person name="Fisk D.G."/>
            <person name="Binkley G."/>
            <person name="Balakrishnan R."/>
            <person name="Costanzo M.C."/>
            <person name="Dwight S.S."/>
            <person name="Hitz B.C."/>
            <person name="Karra K."/>
            <person name="Nash R.S."/>
            <person name="Weng S."/>
            <person name="Wong E.D."/>
            <person name="Lloyd P."/>
            <person name="Skrzypek M.S."/>
            <person name="Miyasato S.R."/>
            <person name="Simison M."/>
            <person name="Cherry J.M."/>
        </authorList>
    </citation>
    <scope>GENOME REANNOTATION</scope>
    <source>
        <strain>ATCC 204508 / S288c</strain>
    </source>
</reference>
<reference key="3">
    <citation type="journal article" date="1998" name="Genome Res.">
        <title>Transposable elements and genome organization: a comprehensive survey of retrotransposons revealed by the complete Saccharomyces cerevisiae genome sequence.</title>
        <authorList>
            <person name="Kim J.M."/>
            <person name="Vanguri S."/>
            <person name="Boeke J.D."/>
            <person name="Gabriel A."/>
            <person name="Voytas D.F."/>
        </authorList>
    </citation>
    <scope>NOMENCLATURE</scope>
</reference>
<reference key="4">
    <citation type="journal article" date="2002" name="Mol. Cell. Biol.">
        <title>Differential effects of chromatin and Gcn4 on the 50-fold range of expression among individual yeast Ty1 retrotransposons.</title>
        <authorList>
            <person name="Morillon A."/>
            <person name="Benard L."/>
            <person name="Springer M."/>
            <person name="Lesage P."/>
        </authorList>
    </citation>
    <scope>INDUCTION</scope>
</reference>
<reference key="5">
    <citation type="journal article" date="2005" name="Cytogenet. Genome Res.">
        <title>Happy together: the life and times of Ty retrotransposons and their hosts.</title>
        <authorList>
            <person name="Lesage P."/>
            <person name="Todeschini A.L."/>
        </authorList>
    </citation>
    <scope>REVIEW</scope>
</reference>
<organism>
    <name type="scientific">Saccharomyces cerevisiae (strain ATCC 204508 / S288c)</name>
    <name type="common">Baker's yeast</name>
    <dbReference type="NCBI Taxonomy" id="559292"/>
    <lineage>
        <taxon>Eukaryota</taxon>
        <taxon>Fungi</taxon>
        <taxon>Dikarya</taxon>
        <taxon>Ascomycota</taxon>
        <taxon>Saccharomycotina</taxon>
        <taxon>Saccharomycetes</taxon>
        <taxon>Saccharomycetales</taxon>
        <taxon>Saccharomycetaceae</taxon>
        <taxon>Saccharomyces</taxon>
    </lineage>
</organism>
<name>YM14A_YEAST</name>